<protein>
    <recommendedName>
        <fullName evidence="1">Nucleoside-triphosphatase THEP1</fullName>
        <shortName evidence="1">NTPase THEP1</shortName>
        <ecNumber evidence="1">3.6.1.15</ecNumber>
    </recommendedName>
    <alternativeName>
        <fullName evidence="1">Nucleoside triphosphate phosphohydrolase</fullName>
    </alternativeName>
</protein>
<organism>
    <name type="scientific">Saccharolobus solfataricus (strain ATCC 35092 / DSM 1617 / JCM 11322 / P2)</name>
    <name type="common">Sulfolobus solfataricus</name>
    <dbReference type="NCBI Taxonomy" id="273057"/>
    <lineage>
        <taxon>Archaea</taxon>
        <taxon>Thermoproteota</taxon>
        <taxon>Thermoprotei</taxon>
        <taxon>Sulfolobales</taxon>
        <taxon>Sulfolobaceae</taxon>
        <taxon>Saccharolobus</taxon>
    </lineage>
</organism>
<reference key="1">
    <citation type="journal article" date="2001" name="Proc. Natl. Acad. Sci. U.S.A.">
        <title>The complete genome of the crenarchaeon Sulfolobus solfataricus P2.</title>
        <authorList>
            <person name="She Q."/>
            <person name="Singh R.K."/>
            <person name="Confalonieri F."/>
            <person name="Zivanovic Y."/>
            <person name="Allard G."/>
            <person name="Awayez M.J."/>
            <person name="Chan-Weiher C.C.-Y."/>
            <person name="Clausen I.G."/>
            <person name="Curtis B.A."/>
            <person name="De Moors A."/>
            <person name="Erauso G."/>
            <person name="Fletcher C."/>
            <person name="Gordon P.M.K."/>
            <person name="Heikamp-de Jong I."/>
            <person name="Jeffries A.C."/>
            <person name="Kozera C.J."/>
            <person name="Medina N."/>
            <person name="Peng X."/>
            <person name="Thi-Ngoc H.P."/>
            <person name="Redder P."/>
            <person name="Schenk M.E."/>
            <person name="Theriault C."/>
            <person name="Tolstrup N."/>
            <person name="Charlebois R.L."/>
            <person name="Doolittle W.F."/>
            <person name="Duguet M."/>
            <person name="Gaasterland T."/>
            <person name="Garrett R.A."/>
            <person name="Ragan M.A."/>
            <person name="Sensen C.W."/>
            <person name="Van der Oost J."/>
        </authorList>
    </citation>
    <scope>NUCLEOTIDE SEQUENCE [LARGE SCALE GENOMIC DNA]</scope>
    <source>
        <strain>ATCC 35092 / DSM 1617 / JCM 11322 / P2</strain>
    </source>
</reference>
<keyword id="KW-0067">ATP-binding</keyword>
<keyword id="KW-0378">Hydrolase</keyword>
<keyword id="KW-0547">Nucleotide-binding</keyword>
<keyword id="KW-1185">Reference proteome</keyword>
<evidence type="ECO:0000255" key="1">
    <source>
        <dbReference type="HAMAP-Rule" id="MF_00796"/>
    </source>
</evidence>
<gene>
    <name type="ordered locus">SSO2171</name>
</gene>
<proteinExistence type="inferred from homology"/>
<feature type="chain" id="PRO_0000146705" description="Nucleoside-triphosphatase THEP1">
    <location>
        <begin position="1"/>
        <end position="175"/>
    </location>
</feature>
<feature type="binding site" evidence="1">
    <location>
        <begin position="15"/>
        <end position="22"/>
    </location>
    <ligand>
        <name>ATP</name>
        <dbReference type="ChEBI" id="CHEBI:30616"/>
    </ligand>
</feature>
<feature type="binding site" evidence="1">
    <location>
        <begin position="106"/>
        <end position="113"/>
    </location>
    <ligand>
        <name>ATP</name>
        <dbReference type="ChEBI" id="CHEBI:30616"/>
    </ligand>
</feature>
<accession>Q97WP0</accession>
<comment type="function">
    <text evidence="1">Has nucleotide phosphatase activity towards ATP, GTP, CTP, TTP and UTP. May hydrolyze nucleoside diphosphates with lower efficiency.</text>
</comment>
<comment type="catalytic activity">
    <reaction evidence="1">
        <text>a ribonucleoside 5'-triphosphate + H2O = a ribonucleoside 5'-diphosphate + phosphate + H(+)</text>
        <dbReference type="Rhea" id="RHEA:23680"/>
        <dbReference type="ChEBI" id="CHEBI:15377"/>
        <dbReference type="ChEBI" id="CHEBI:15378"/>
        <dbReference type="ChEBI" id="CHEBI:43474"/>
        <dbReference type="ChEBI" id="CHEBI:57930"/>
        <dbReference type="ChEBI" id="CHEBI:61557"/>
        <dbReference type="EC" id="3.6.1.15"/>
    </reaction>
</comment>
<comment type="similarity">
    <text evidence="1">Belongs to the THEP1 NTPase family.</text>
</comment>
<dbReference type="EC" id="3.6.1.15" evidence="1"/>
<dbReference type="EMBL" id="AE006641">
    <property type="protein sequence ID" value="AAK42346.1"/>
    <property type="molecule type" value="Genomic_DNA"/>
</dbReference>
<dbReference type="PIR" id="C90386">
    <property type="entry name" value="C90386"/>
</dbReference>
<dbReference type="RefSeq" id="WP_009992133.1">
    <property type="nucleotide sequence ID" value="NC_002754.1"/>
</dbReference>
<dbReference type="SMR" id="Q97WP0"/>
<dbReference type="FunCoup" id="Q97WP0">
    <property type="interactions" value="148"/>
</dbReference>
<dbReference type="STRING" id="273057.SSO2171"/>
<dbReference type="PaxDb" id="273057-SSO2171"/>
<dbReference type="EnsemblBacteria" id="AAK42346">
    <property type="protein sequence ID" value="AAK42346"/>
    <property type="gene ID" value="SSO2171"/>
</dbReference>
<dbReference type="KEGG" id="sso:SSO2171"/>
<dbReference type="PATRIC" id="fig|273057.12.peg.2266"/>
<dbReference type="eggNOG" id="arCOG01034">
    <property type="taxonomic scope" value="Archaea"/>
</dbReference>
<dbReference type="HOGENOM" id="CLU_103145_1_1_2"/>
<dbReference type="InParanoid" id="Q97WP0"/>
<dbReference type="PhylomeDB" id="Q97WP0"/>
<dbReference type="Proteomes" id="UP000001974">
    <property type="component" value="Chromosome"/>
</dbReference>
<dbReference type="GO" id="GO:0005524">
    <property type="term" value="F:ATP binding"/>
    <property type="evidence" value="ECO:0007669"/>
    <property type="project" value="UniProtKB-UniRule"/>
</dbReference>
<dbReference type="GO" id="GO:0016887">
    <property type="term" value="F:ATP hydrolysis activity"/>
    <property type="evidence" value="ECO:0007669"/>
    <property type="project" value="InterPro"/>
</dbReference>
<dbReference type="CDD" id="cd19482">
    <property type="entry name" value="RecA-like_Thep1"/>
    <property type="match status" value="1"/>
</dbReference>
<dbReference type="Gene3D" id="3.40.50.300">
    <property type="entry name" value="P-loop containing nucleotide triphosphate hydrolases"/>
    <property type="match status" value="1"/>
</dbReference>
<dbReference type="HAMAP" id="MF_00796">
    <property type="entry name" value="NTPase_1"/>
    <property type="match status" value="1"/>
</dbReference>
<dbReference type="InterPro" id="IPR003593">
    <property type="entry name" value="AAA+_ATPase"/>
</dbReference>
<dbReference type="InterPro" id="IPR004948">
    <property type="entry name" value="Nuc-triphosphatase_THEP1"/>
</dbReference>
<dbReference type="InterPro" id="IPR027417">
    <property type="entry name" value="P-loop_NTPase"/>
</dbReference>
<dbReference type="NCBIfam" id="NF010248">
    <property type="entry name" value="PRK13695.1"/>
    <property type="match status" value="1"/>
</dbReference>
<dbReference type="PANTHER" id="PTHR43146">
    <property type="entry name" value="CANCER-RELATED NUCLEOSIDE-TRIPHOSPHATASE"/>
    <property type="match status" value="1"/>
</dbReference>
<dbReference type="PANTHER" id="PTHR43146:SF1">
    <property type="entry name" value="CANCER-RELATED NUCLEOSIDE-TRIPHOSPHATASE"/>
    <property type="match status" value="1"/>
</dbReference>
<dbReference type="Pfam" id="PF03266">
    <property type="entry name" value="NTPase_1"/>
    <property type="match status" value="1"/>
</dbReference>
<dbReference type="SMART" id="SM00382">
    <property type="entry name" value="AAA"/>
    <property type="match status" value="1"/>
</dbReference>
<dbReference type="SUPFAM" id="SSF52540">
    <property type="entry name" value="P-loop containing nucleoside triphosphate hydrolases"/>
    <property type="match status" value="1"/>
</dbReference>
<name>NTPTH_SACS2</name>
<sequence>MLEESKNALRVFITGNPGVGKTTILLFLINKLSENNYKVAGFYCPEVRENGRRIGFRIVDITTNEGDWLAKENAPGRVKIGKYTVLEDSAKRITEITLSNINKADVLAIDEIGPMELKIPTIKKLIETILNNQKPLIAVLHRTQKPMGGRIYVITVENRDSIKYEILNYILSSLD</sequence>